<feature type="chain" id="PRO_1000194839" description="Phosphoribosylformylglycinamidine synthase subunit PurL">
    <location>
        <begin position="1"/>
        <end position="693"/>
    </location>
</feature>
<feature type="active site" evidence="1">
    <location>
        <position position="34"/>
    </location>
</feature>
<feature type="active site" description="Proton acceptor" evidence="1">
    <location>
        <position position="80"/>
    </location>
</feature>
<feature type="binding site" evidence="1">
    <location>
        <position position="37"/>
    </location>
    <ligand>
        <name>ATP</name>
        <dbReference type="ChEBI" id="CHEBI:30616"/>
    </ligand>
</feature>
<feature type="binding site" evidence="1">
    <location>
        <position position="76"/>
    </location>
    <ligand>
        <name>ATP</name>
        <dbReference type="ChEBI" id="CHEBI:30616"/>
    </ligand>
</feature>
<feature type="binding site" evidence="1">
    <location>
        <position position="78"/>
    </location>
    <ligand>
        <name>Mg(2+)</name>
        <dbReference type="ChEBI" id="CHEBI:18420"/>
        <label>1</label>
    </ligand>
</feature>
<feature type="binding site" evidence="1">
    <location>
        <begin position="79"/>
        <end position="82"/>
    </location>
    <ligand>
        <name>substrate</name>
    </ligand>
</feature>
<feature type="binding site" evidence="1">
    <location>
        <position position="101"/>
    </location>
    <ligand>
        <name>substrate</name>
    </ligand>
</feature>
<feature type="binding site" evidence="1">
    <location>
        <position position="102"/>
    </location>
    <ligand>
        <name>Mg(2+)</name>
        <dbReference type="ChEBI" id="CHEBI:18420"/>
        <label>2</label>
    </ligand>
</feature>
<feature type="binding site" evidence="1">
    <location>
        <position position="222"/>
    </location>
    <ligand>
        <name>substrate</name>
    </ligand>
</feature>
<feature type="binding site" evidence="1">
    <location>
        <position position="248"/>
    </location>
    <ligand>
        <name>Mg(2+)</name>
        <dbReference type="ChEBI" id="CHEBI:18420"/>
        <label>2</label>
    </ligand>
</feature>
<feature type="binding site" evidence="1">
    <location>
        <begin position="292"/>
        <end position="294"/>
    </location>
    <ligand>
        <name>substrate</name>
    </ligand>
</feature>
<feature type="binding site" evidence="1">
    <location>
        <position position="470"/>
    </location>
    <ligand>
        <name>ATP</name>
        <dbReference type="ChEBI" id="CHEBI:30616"/>
    </ligand>
</feature>
<feature type="binding site" evidence="1">
    <location>
        <position position="507"/>
    </location>
    <ligand>
        <name>ATP</name>
        <dbReference type="ChEBI" id="CHEBI:30616"/>
    </ligand>
</feature>
<feature type="binding site" evidence="1">
    <location>
        <position position="510"/>
    </location>
    <ligand>
        <name>substrate</name>
    </ligand>
</feature>
<dbReference type="EC" id="6.3.5.3" evidence="1"/>
<dbReference type="EMBL" id="CP001014">
    <property type="protein sequence ID" value="ACB40827.1"/>
    <property type="molecule type" value="Genomic_DNA"/>
</dbReference>
<dbReference type="RefSeq" id="WP_012351246.1">
    <property type="nucleotide sequence ID" value="NC_010525.1"/>
</dbReference>
<dbReference type="SMR" id="B1YBM5"/>
<dbReference type="STRING" id="444157.Tneu_1912"/>
<dbReference type="GeneID" id="6164920"/>
<dbReference type="KEGG" id="tne:Tneu_1912"/>
<dbReference type="eggNOG" id="arCOG00641">
    <property type="taxonomic scope" value="Archaea"/>
</dbReference>
<dbReference type="HOGENOM" id="CLU_003100_0_1_2"/>
<dbReference type="OrthoDB" id="8251at2157"/>
<dbReference type="UniPathway" id="UPA00074">
    <property type="reaction ID" value="UER00128"/>
</dbReference>
<dbReference type="Proteomes" id="UP000001694">
    <property type="component" value="Chromosome"/>
</dbReference>
<dbReference type="GO" id="GO:0005737">
    <property type="term" value="C:cytoplasm"/>
    <property type="evidence" value="ECO:0007669"/>
    <property type="project" value="UniProtKB-SubCell"/>
</dbReference>
<dbReference type="GO" id="GO:0005524">
    <property type="term" value="F:ATP binding"/>
    <property type="evidence" value="ECO:0007669"/>
    <property type="project" value="UniProtKB-UniRule"/>
</dbReference>
<dbReference type="GO" id="GO:0000287">
    <property type="term" value="F:magnesium ion binding"/>
    <property type="evidence" value="ECO:0007669"/>
    <property type="project" value="UniProtKB-UniRule"/>
</dbReference>
<dbReference type="GO" id="GO:0004642">
    <property type="term" value="F:phosphoribosylformylglycinamidine synthase activity"/>
    <property type="evidence" value="ECO:0007669"/>
    <property type="project" value="UniProtKB-UniRule"/>
</dbReference>
<dbReference type="GO" id="GO:0006189">
    <property type="term" value="P:'de novo' IMP biosynthetic process"/>
    <property type="evidence" value="ECO:0007669"/>
    <property type="project" value="UniProtKB-UniRule"/>
</dbReference>
<dbReference type="CDD" id="cd02203">
    <property type="entry name" value="PurL_repeat1"/>
    <property type="match status" value="1"/>
</dbReference>
<dbReference type="CDD" id="cd02204">
    <property type="entry name" value="PurL_repeat2"/>
    <property type="match status" value="1"/>
</dbReference>
<dbReference type="Gene3D" id="3.90.650.10">
    <property type="entry name" value="PurM-like C-terminal domain"/>
    <property type="match status" value="2"/>
</dbReference>
<dbReference type="Gene3D" id="3.30.1330.10">
    <property type="entry name" value="PurM-like, N-terminal domain"/>
    <property type="match status" value="2"/>
</dbReference>
<dbReference type="HAMAP" id="MF_00420">
    <property type="entry name" value="PurL_2"/>
    <property type="match status" value="1"/>
</dbReference>
<dbReference type="InterPro" id="IPR010074">
    <property type="entry name" value="PRibForGlyAmidine_synth_PurL"/>
</dbReference>
<dbReference type="InterPro" id="IPR041609">
    <property type="entry name" value="PurL_linker"/>
</dbReference>
<dbReference type="InterPro" id="IPR010918">
    <property type="entry name" value="PurM-like_C_dom"/>
</dbReference>
<dbReference type="InterPro" id="IPR036676">
    <property type="entry name" value="PurM-like_C_sf"/>
</dbReference>
<dbReference type="InterPro" id="IPR016188">
    <property type="entry name" value="PurM-like_N"/>
</dbReference>
<dbReference type="InterPro" id="IPR036921">
    <property type="entry name" value="PurM-like_N_sf"/>
</dbReference>
<dbReference type="NCBIfam" id="TIGR01736">
    <property type="entry name" value="FGAM_synth_II"/>
    <property type="match status" value="1"/>
</dbReference>
<dbReference type="NCBIfam" id="NF002290">
    <property type="entry name" value="PRK01213.1"/>
    <property type="match status" value="1"/>
</dbReference>
<dbReference type="PANTHER" id="PTHR43555">
    <property type="entry name" value="PHOSPHORIBOSYLFORMYLGLYCINAMIDINE SYNTHASE SUBUNIT PURL"/>
    <property type="match status" value="1"/>
</dbReference>
<dbReference type="PANTHER" id="PTHR43555:SF1">
    <property type="entry name" value="PHOSPHORIBOSYLFORMYLGLYCINAMIDINE SYNTHASE SUBUNIT PURL"/>
    <property type="match status" value="1"/>
</dbReference>
<dbReference type="Pfam" id="PF00586">
    <property type="entry name" value="AIRS"/>
    <property type="match status" value="2"/>
</dbReference>
<dbReference type="Pfam" id="PF02769">
    <property type="entry name" value="AIRS_C"/>
    <property type="match status" value="2"/>
</dbReference>
<dbReference type="Pfam" id="PF18072">
    <property type="entry name" value="FGAR-AT_linker"/>
    <property type="match status" value="1"/>
</dbReference>
<dbReference type="PIRSF" id="PIRSF001587">
    <property type="entry name" value="FGAM_synthase_II"/>
    <property type="match status" value="1"/>
</dbReference>
<dbReference type="SUPFAM" id="SSF56042">
    <property type="entry name" value="PurM C-terminal domain-like"/>
    <property type="match status" value="2"/>
</dbReference>
<dbReference type="SUPFAM" id="SSF55326">
    <property type="entry name" value="PurM N-terminal domain-like"/>
    <property type="match status" value="2"/>
</dbReference>
<comment type="function">
    <text evidence="1">Part of the phosphoribosylformylglycinamidine synthase complex involved in the purines biosynthetic pathway. Catalyzes the ATP-dependent conversion of formylglycinamide ribonucleotide (FGAR) and glutamine to yield formylglycinamidine ribonucleotide (FGAM) and glutamate. The FGAM synthase complex is composed of three subunits. PurQ produces an ammonia molecule by converting glutamine to glutamate. PurL transfers the ammonia molecule to FGAR to form FGAM in an ATP-dependent manner. PurS interacts with PurQ and PurL and is thought to assist in the transfer of the ammonia molecule from PurQ to PurL.</text>
</comment>
<comment type="catalytic activity">
    <reaction evidence="1">
        <text>N(2)-formyl-N(1)-(5-phospho-beta-D-ribosyl)glycinamide + L-glutamine + ATP + H2O = 2-formamido-N(1)-(5-O-phospho-beta-D-ribosyl)acetamidine + L-glutamate + ADP + phosphate + H(+)</text>
        <dbReference type="Rhea" id="RHEA:17129"/>
        <dbReference type="ChEBI" id="CHEBI:15377"/>
        <dbReference type="ChEBI" id="CHEBI:15378"/>
        <dbReference type="ChEBI" id="CHEBI:29985"/>
        <dbReference type="ChEBI" id="CHEBI:30616"/>
        <dbReference type="ChEBI" id="CHEBI:43474"/>
        <dbReference type="ChEBI" id="CHEBI:58359"/>
        <dbReference type="ChEBI" id="CHEBI:147286"/>
        <dbReference type="ChEBI" id="CHEBI:147287"/>
        <dbReference type="ChEBI" id="CHEBI:456216"/>
        <dbReference type="EC" id="6.3.5.3"/>
    </reaction>
</comment>
<comment type="pathway">
    <text evidence="1">Purine metabolism; IMP biosynthesis via de novo pathway; 5-amino-1-(5-phospho-D-ribosyl)imidazole from N(2)-formyl-N(1)-(5-phospho-D-ribosyl)glycinamide: step 1/2.</text>
</comment>
<comment type="subunit">
    <text evidence="1">Monomer. Part of the FGAM synthase complex composed of 1 PurL, 1 PurQ and 2 PurS subunits.</text>
</comment>
<comment type="subcellular location">
    <subcellularLocation>
        <location evidence="1">Cytoplasm</location>
    </subcellularLocation>
</comment>
<comment type="similarity">
    <text evidence="1">Belongs to the FGAMS family.</text>
</comment>
<accession>B1YBM5</accession>
<protein>
    <recommendedName>
        <fullName evidence="1">Phosphoribosylformylglycinamidine synthase subunit PurL</fullName>
        <shortName evidence="1">FGAM synthase</shortName>
        <ecNumber evidence="1">6.3.5.3</ecNumber>
    </recommendedName>
    <alternativeName>
        <fullName evidence="1">Formylglycinamide ribonucleotide amidotransferase subunit II</fullName>
        <shortName evidence="1">FGAR amidotransferase II</shortName>
        <shortName evidence="1">FGAR-AT II</shortName>
    </alternativeName>
    <alternativeName>
        <fullName evidence="1">Glutamine amidotransferase PurL</fullName>
    </alternativeName>
    <alternativeName>
        <fullName evidence="1">Phosphoribosylformylglycinamidine synthase subunit II</fullName>
    </alternativeName>
</protein>
<name>PURL_PYRNV</name>
<evidence type="ECO:0000255" key="1">
    <source>
        <dbReference type="HAMAP-Rule" id="MF_00420"/>
    </source>
</evidence>
<organism>
    <name type="scientific">Pyrobaculum neutrophilum (strain DSM 2338 / JCM 9278 / NBRC 100436 / V24Sta)</name>
    <name type="common">Thermoproteus neutrophilus</name>
    <dbReference type="NCBI Taxonomy" id="444157"/>
    <lineage>
        <taxon>Archaea</taxon>
        <taxon>Thermoproteota</taxon>
        <taxon>Thermoprotei</taxon>
        <taxon>Thermoproteales</taxon>
        <taxon>Thermoproteaceae</taxon>
        <taxon>Pyrobaculum</taxon>
    </lineage>
</organism>
<proteinExistence type="inferred from homology"/>
<gene>
    <name evidence="1" type="primary">purL</name>
    <name type="ordered locus">Tneu_1912</name>
</gene>
<keyword id="KW-0067">ATP-binding</keyword>
<keyword id="KW-0963">Cytoplasm</keyword>
<keyword id="KW-0436">Ligase</keyword>
<keyword id="KW-0460">Magnesium</keyword>
<keyword id="KW-0479">Metal-binding</keyword>
<keyword id="KW-0547">Nucleotide-binding</keyword>
<keyword id="KW-0658">Purine biosynthesis</keyword>
<sequence length="693" mass="74555">MALTRQELELIRRGLGREPTAAELAFFTSHWSEHCSYKSTRRWLRELPGSAPWVVRGRGTDAPLVEVAPGLYVSFKIESHNHPSAVDPYNGAATGVGGIIRDILTVGATPVALLVNLHFGPPEDPHARWIFSNVVKGISDYGNRVGVPVVGGETWFDEDFTYTPIVLATCVGVVEAEAVPRGGVAPGDYLVVAGLGADRSGLGGSAFASKTLEGGEDLGAVQVADPLMGKKLIDVVREAGRCVKFIKDLGGGGLATALAELSSWFSLGIEFHLDKLHVRDRAAAPEELLISETQERLIFVVSPQDLPCLEAALRRYEVPYSIPGRFVEGGRVWVMWRGERVVDIPISLADGAPEVLWPQEPYQPPELPQLPEPPLEKALDLVLSSPNVAKKESIYMRFDFDVGVKTAVKPGEGDAAVLKLYQRGQLGLVVKGDANPRYTFLDPRLGAANAFVKAYRNVAVVGGVPLAAVDSINVGSPERPRVYWQFVQAVQGLREAAAELEVPIVGGKVSLYNEYMGRPVKPTVAVVVLGRIDDVSKANRAMWREGDRIFVWGVTRGEVGGSEYLKRVHGVVAGRPPAVDYGAERKIVDVVQSWLGRLTGATDVGVGGLAAALAKMAVNSGVGATVDVCRAPSDVGRLDFLLFSESNGRFVAAGEEGPGVAVGEAHGDVFEVRCGGTLLYKRRVEELRRLMLL</sequence>
<reference key="1">
    <citation type="submission" date="2008-03" db="EMBL/GenBank/DDBJ databases">
        <title>Complete sequence of Thermoproteus neutrophilus V24Sta.</title>
        <authorList>
            <consortium name="US DOE Joint Genome Institute"/>
            <person name="Copeland A."/>
            <person name="Lucas S."/>
            <person name="Lapidus A."/>
            <person name="Glavina del Rio T."/>
            <person name="Dalin E."/>
            <person name="Tice H."/>
            <person name="Bruce D."/>
            <person name="Goodwin L."/>
            <person name="Pitluck S."/>
            <person name="Sims D."/>
            <person name="Brettin T."/>
            <person name="Detter J.C."/>
            <person name="Han C."/>
            <person name="Kuske C.R."/>
            <person name="Schmutz J."/>
            <person name="Larimer F."/>
            <person name="Land M."/>
            <person name="Hauser L."/>
            <person name="Kyrpides N."/>
            <person name="Mikhailova N."/>
            <person name="Biddle J.F."/>
            <person name="Zhang Z."/>
            <person name="Fitz-Gibbon S.T."/>
            <person name="Lowe T.M."/>
            <person name="Saltikov C."/>
            <person name="House C.H."/>
            <person name="Richardson P."/>
        </authorList>
    </citation>
    <scope>NUCLEOTIDE SEQUENCE [LARGE SCALE GENOMIC DNA]</scope>
    <source>
        <strain>DSM 2338 / JCM 9278 / NBRC 100436 / V24Sta</strain>
    </source>
</reference>